<comment type="function">
    <text evidence="4 5 6">Salivary protein with anticoagulant activity that inhibits host thrombin (F2); binds to the proteinase in a reverse orientation (opposite to substrates) (PubMed:10460178, PubMed:10600131, PubMed:23223529). Inhibits thrombin-induced platelet aggregation (PubMed:10460178).</text>
</comment>
<comment type="activity regulation">
    <text evidence="5">Increasing concentration of NaCl decreases affinity for thrombin.</text>
</comment>
<comment type="subunit">
    <text evidence="5 6 7">Interacts with human F2 (thrombin); the interaction results in thrombin inhibition.</text>
</comment>
<comment type="subcellular location">
    <subcellularLocation>
        <location evidence="8">Secreted</location>
    </subcellularLocation>
</comment>
<comment type="tissue specificity">
    <text evidence="4">Salivary gland (at protein level).</text>
</comment>
<comment type="miscellaneous">
    <text evidence="4">Does not inhibit host coagulation factor Xa (F10), factor IXa (F9), activated protein C (PROC), trypsin, chymotrypsin, neutrophil elastase (ELANE), papain, plasmin (PLG) and thrombin-like enzyme batroxobin from Bothrops atrox.</text>
</comment>
<comment type="similarity">
    <text evidence="8">Belongs to the anophelin family.</text>
</comment>
<keyword id="KW-0002">3D-structure</keyword>
<keyword id="KW-1203">Blood coagulation cascade inhibiting toxin</keyword>
<keyword id="KW-0325">Glycoprotein</keyword>
<keyword id="KW-1199">Hemostasis impairing toxin</keyword>
<keyword id="KW-1201">Platelet aggregation inhibiting toxin</keyword>
<keyword id="KW-0964">Secreted</keyword>
<keyword id="KW-0732">Signal</keyword>
<keyword id="KW-0800">Toxin</keyword>
<protein>
    <recommendedName>
        <fullName evidence="8">Salivary thrombin inhibitor anophelin</fullName>
    </recommendedName>
</protein>
<feature type="signal peptide" evidence="1">
    <location>
        <begin position="1"/>
        <end position="22"/>
    </location>
</feature>
<feature type="chain" id="PRO_5014589487" description="Salivary thrombin inhibitor anophelin" evidence="1">
    <location>
        <begin position="23"/>
        <end position="83"/>
    </location>
</feature>
<feature type="region of interest" description="Disordered" evidence="3">
    <location>
        <begin position="25"/>
        <end position="51"/>
    </location>
</feature>
<feature type="region of interest" description="Sufficient for host thrombin inhibition" evidence="6">
    <location>
        <begin position="54"/>
        <end position="83"/>
    </location>
</feature>
<feature type="region of interest" description="Blocks exosite I of host thrombin" evidence="6 10 11">
    <location>
        <begin position="56"/>
        <end position="62"/>
    </location>
</feature>
<feature type="region of interest" description="Disordered" evidence="3">
    <location>
        <begin position="64"/>
        <end position="83"/>
    </location>
</feature>
<feature type="region of interest" description="Blocks active site cleft of host thrombin in a reverse direction compared to substrates" evidence="6 10 11">
    <location>
        <begin position="72"/>
        <end position="75"/>
    </location>
</feature>
<feature type="compositionally biased region" description="Basic and acidic residues" evidence="3">
    <location>
        <begin position="73"/>
        <end position="83"/>
    </location>
</feature>
<feature type="glycosylation site" description="N-linked (GlcNAc...) asparagine" evidence="2">
    <location>
        <position position="47"/>
    </location>
</feature>
<feature type="mutagenesis site" description="Reduces anticoagulant activity and thrombin binding." evidence="6">
    <original>D</original>
    <variation>A</variation>
    <variation>E</variation>
    <variation>N</variation>
    <location>
        <position position="72"/>
    </location>
</feature>
<feature type="mutagenesis site" description="Abolishes anticoagulant activity and thrombin binding." evidence="6">
    <original>R</original>
    <variation>A</variation>
    <location>
        <position position="75"/>
    </location>
</feature>
<feature type="mutagenesis site" description="Reduces anticoagulant activity and thrombin binding." evidence="6">
    <original>R</original>
    <variation>H</variation>
    <variation>Q</variation>
    <location>
        <position position="75"/>
    </location>
</feature>
<feature type="mutagenesis site" description="Reduces thrombin binding. No significant effects on anticoagulant activity." evidence="6">
    <original>R</original>
    <variation>K</variation>
    <location>
        <position position="75"/>
    </location>
</feature>
<feature type="mutagenesis site" description="Reduces thrombin binding. No significant effects on anticoagulant activity." evidence="6">
    <original>R</original>
    <variation>A</variation>
    <variation>N</variation>
    <variation>E</variation>
    <location>
        <position position="76"/>
    </location>
</feature>
<feature type="turn" evidence="14">
    <location>
        <begin position="58"/>
        <end position="61"/>
    </location>
</feature>
<feature type="helix" evidence="14">
    <location>
        <begin position="73"/>
        <end position="75"/>
    </location>
</feature>
<feature type="helix" evidence="14">
    <location>
        <begin position="78"/>
        <end position="80"/>
    </location>
</feature>
<reference evidence="9" key="1">
    <citation type="journal article" date="1999" name="Biochemistry">
        <title>Purification, cloning, and synthesis of a novel salivary anti-thrombin from the mosquito Anopheles albimanus.</title>
        <authorList>
            <person name="Valenzuela J.G."/>
            <person name="Francischetti I.M."/>
            <person name="Ribeiro J.M."/>
        </authorList>
    </citation>
    <scope>NUCLEOTIDE SEQUENCE [MRNA]</scope>
    <scope>IDENTIFICATION BY MASS SPECTROMETRY</scope>
    <scope>FUNCTION</scope>
    <scope>TISSUE SPECIFICITY</scope>
    <source>
        <strain evidence="9">Santa Tecla</strain>
        <tissue evidence="9">Salivary gland</tissue>
    </source>
</reference>
<reference evidence="8" key="2">
    <citation type="journal article" date="1999" name="Biochemistry">
        <title>Anophelin: kinetics and mechanism of thrombin inhibition.</title>
        <authorList>
            <person name="Francischetti I.M."/>
            <person name="Valenzuela J.G."/>
            <person name="Ribeiro J.M."/>
        </authorList>
    </citation>
    <scope>FUNCTION</scope>
    <scope>ACTIVITY REGULATION</scope>
    <scope>INTERACTION WITH HOST THROMBIN</scope>
</reference>
<reference evidence="8" key="3">
    <citation type="journal article" date="2017" name="J. Biol. Chem.">
        <title>Functional analyses yield detailed insight into the mechanism of thrombin inhibition by the antihemostatic salivary protein cE5 from Anopheles gambiae.</title>
        <authorList>
            <person name="Pirone L."/>
            <person name="Ripoll-Rozada J."/>
            <person name="Leone M."/>
            <person name="Ronca R."/>
            <person name="Lombardo F."/>
            <person name="Fiorentino G."/>
            <person name="Andersen J.F."/>
            <person name="Pereira P.J.B."/>
            <person name="Arca B."/>
            <person name="Pedone E."/>
        </authorList>
    </citation>
    <scope>INTERACTION WITH HOST THROMBIN</scope>
</reference>
<reference evidence="12 13" key="4">
    <citation type="journal article" date="2012" name="Proc. Natl. Acad. Sci. U.S.A.">
        <title>Unique thrombin inhibition mechanism by anophelin, an anticoagulant from the malaria vector.</title>
        <authorList>
            <person name="Figueiredo A.C."/>
            <person name="de Sanctis D."/>
            <person name="Gutierrez-Gallego R."/>
            <person name="Cereija T.B."/>
            <person name="Macedo-Ribeiro S."/>
            <person name="Fuentes-Prior P."/>
            <person name="Pereira P.J."/>
        </authorList>
    </citation>
    <scope>X-RAY CRYSTALLOGRAPHY (2.30 ANGSTROMS) OF 23-83</scope>
    <scope>FUNCTION</scope>
    <scope>INTERACTION WITH HOST THROMBIN</scope>
    <scope>REGIONS</scope>
    <scope>MUTAGENESIS OF ASP-72; ARG-75 AND ARG-76</scope>
</reference>
<dbReference type="EMBL" id="AF125095">
    <property type="protein sequence ID" value="AAF29443.1"/>
    <property type="molecule type" value="mRNA"/>
</dbReference>
<dbReference type="PDB" id="4E05">
    <property type="method" value="X-ray"/>
    <property type="resolution" value="2.30 A"/>
    <property type="chains" value="I=23-83"/>
</dbReference>
<dbReference type="PDB" id="4E06">
    <property type="method" value="X-ray"/>
    <property type="resolution" value="3.20 A"/>
    <property type="chains" value="I=23-83"/>
</dbReference>
<dbReference type="PDBsum" id="4E05"/>
<dbReference type="PDBsum" id="4E06"/>
<dbReference type="SMR" id="Q9NJS1"/>
<dbReference type="MEROPS" id="I77.001"/>
<dbReference type="EnsemblMetazoa" id="AALB014019-RA">
    <property type="protein sequence ID" value="AALB014019-PA"/>
    <property type="gene ID" value="AALB014019"/>
</dbReference>
<dbReference type="VEuPathDB" id="VectorBase:AALB014019"/>
<dbReference type="VEuPathDB" id="VectorBase:AALB20_027800"/>
<dbReference type="OrthoDB" id="7737463at2759"/>
<dbReference type="Proteomes" id="UP000069272">
    <property type="component" value="Chromosome 2L"/>
</dbReference>
<dbReference type="GO" id="GO:0005576">
    <property type="term" value="C:extracellular region"/>
    <property type="evidence" value="ECO:0007669"/>
    <property type="project" value="UniProtKB-SubCell"/>
</dbReference>
<dbReference type="GO" id="GO:0140678">
    <property type="term" value="F:molecular function inhibitor activity"/>
    <property type="evidence" value="ECO:0000269"/>
    <property type="project" value="DisProt"/>
</dbReference>
<dbReference type="GO" id="GO:0090729">
    <property type="term" value="F:toxin activity"/>
    <property type="evidence" value="ECO:0007669"/>
    <property type="project" value="UniProtKB-KW"/>
</dbReference>
<dbReference type="DisProt" id="DP00824"/>
<dbReference type="InterPro" id="IPR018932">
    <property type="entry name" value="Thrombin_inhibitor_anophelin"/>
</dbReference>
<dbReference type="Pfam" id="PF10731">
    <property type="entry name" value="Anophelin"/>
    <property type="match status" value="1"/>
</dbReference>
<proteinExistence type="evidence at protein level"/>
<accession>Q9NJS1</accession>
<gene>
    <name evidence="9" type="primary">AT</name>
</gene>
<name>SATPA_ANOAL</name>
<sequence>MANKLVLISLLCVVLVAKITQAAPQYAPGDEPSYDEDTDDSDKLVENDTSITDEDYAAIEASLSETFNTAADPGRRLGEGSKP</sequence>
<organism evidence="9">
    <name type="scientific">Anopheles albimanus</name>
    <name type="common">New world malaria mosquito</name>
    <dbReference type="NCBI Taxonomy" id="7167"/>
    <lineage>
        <taxon>Eukaryota</taxon>
        <taxon>Metazoa</taxon>
        <taxon>Ecdysozoa</taxon>
        <taxon>Arthropoda</taxon>
        <taxon>Hexapoda</taxon>
        <taxon>Insecta</taxon>
        <taxon>Pterygota</taxon>
        <taxon>Neoptera</taxon>
        <taxon>Endopterygota</taxon>
        <taxon>Diptera</taxon>
        <taxon>Nematocera</taxon>
        <taxon>Culicoidea</taxon>
        <taxon>Culicidae</taxon>
        <taxon>Anophelinae</taxon>
        <taxon>Anopheles</taxon>
    </lineage>
</organism>
<evidence type="ECO:0000255" key="1"/>
<evidence type="ECO:0000255" key="2">
    <source>
        <dbReference type="PROSITE-ProRule" id="PRU00498"/>
    </source>
</evidence>
<evidence type="ECO:0000256" key="3">
    <source>
        <dbReference type="SAM" id="MobiDB-lite"/>
    </source>
</evidence>
<evidence type="ECO:0000269" key="4">
    <source>
    </source>
</evidence>
<evidence type="ECO:0000269" key="5">
    <source>
    </source>
</evidence>
<evidence type="ECO:0000269" key="6">
    <source>
    </source>
</evidence>
<evidence type="ECO:0000269" key="7">
    <source>
    </source>
</evidence>
<evidence type="ECO:0000305" key="8"/>
<evidence type="ECO:0000312" key="9">
    <source>
        <dbReference type="EMBL" id="AAF29443.1"/>
    </source>
</evidence>
<evidence type="ECO:0000312" key="10">
    <source>
        <dbReference type="PDB" id="4E05"/>
    </source>
</evidence>
<evidence type="ECO:0000312" key="11">
    <source>
        <dbReference type="PDB" id="4E06"/>
    </source>
</evidence>
<evidence type="ECO:0007744" key="12">
    <source>
        <dbReference type="PDB" id="4E05"/>
    </source>
</evidence>
<evidence type="ECO:0007744" key="13">
    <source>
        <dbReference type="PDB" id="4E06"/>
    </source>
</evidence>
<evidence type="ECO:0007829" key="14">
    <source>
        <dbReference type="PDB" id="4E05"/>
    </source>
</evidence>